<protein>
    <recommendedName>
        <fullName evidence="1">Large ribosomal subunit protein uL6</fullName>
    </recommendedName>
    <alternativeName>
        <fullName evidence="2">50S ribosomal protein L6</fullName>
    </alternativeName>
</protein>
<proteinExistence type="inferred from homology"/>
<organism>
    <name type="scientific">Rhodospirillum centenum (strain ATCC 51521 / SW)</name>
    <dbReference type="NCBI Taxonomy" id="414684"/>
    <lineage>
        <taxon>Bacteria</taxon>
        <taxon>Pseudomonadati</taxon>
        <taxon>Pseudomonadota</taxon>
        <taxon>Alphaproteobacteria</taxon>
        <taxon>Rhodospirillales</taxon>
        <taxon>Rhodospirillaceae</taxon>
        <taxon>Rhodospirillum</taxon>
    </lineage>
</organism>
<keyword id="KW-1185">Reference proteome</keyword>
<keyword id="KW-0687">Ribonucleoprotein</keyword>
<keyword id="KW-0689">Ribosomal protein</keyword>
<keyword id="KW-0694">RNA-binding</keyword>
<keyword id="KW-0699">rRNA-binding</keyword>
<dbReference type="EMBL" id="CP000613">
    <property type="protein sequence ID" value="ACI98157.1"/>
    <property type="molecule type" value="Genomic_DNA"/>
</dbReference>
<dbReference type="RefSeq" id="WP_012565948.1">
    <property type="nucleotide sequence ID" value="NC_011420.2"/>
</dbReference>
<dbReference type="SMR" id="B6IRS1"/>
<dbReference type="STRING" id="414684.RC1_0726"/>
<dbReference type="KEGG" id="rce:RC1_0726"/>
<dbReference type="eggNOG" id="COG0097">
    <property type="taxonomic scope" value="Bacteria"/>
</dbReference>
<dbReference type="HOGENOM" id="CLU_065464_1_2_5"/>
<dbReference type="OrthoDB" id="9805007at2"/>
<dbReference type="Proteomes" id="UP000001591">
    <property type="component" value="Chromosome"/>
</dbReference>
<dbReference type="GO" id="GO:0022625">
    <property type="term" value="C:cytosolic large ribosomal subunit"/>
    <property type="evidence" value="ECO:0007669"/>
    <property type="project" value="TreeGrafter"/>
</dbReference>
<dbReference type="GO" id="GO:0019843">
    <property type="term" value="F:rRNA binding"/>
    <property type="evidence" value="ECO:0007669"/>
    <property type="project" value="UniProtKB-UniRule"/>
</dbReference>
<dbReference type="GO" id="GO:0003735">
    <property type="term" value="F:structural constituent of ribosome"/>
    <property type="evidence" value="ECO:0007669"/>
    <property type="project" value="InterPro"/>
</dbReference>
<dbReference type="GO" id="GO:0002181">
    <property type="term" value="P:cytoplasmic translation"/>
    <property type="evidence" value="ECO:0007669"/>
    <property type="project" value="TreeGrafter"/>
</dbReference>
<dbReference type="FunFam" id="3.90.930.12:FF:000001">
    <property type="entry name" value="50S ribosomal protein L6"/>
    <property type="match status" value="1"/>
</dbReference>
<dbReference type="Gene3D" id="3.90.930.12">
    <property type="entry name" value="Ribosomal protein L6, alpha-beta domain"/>
    <property type="match status" value="2"/>
</dbReference>
<dbReference type="HAMAP" id="MF_01365_B">
    <property type="entry name" value="Ribosomal_uL6_B"/>
    <property type="match status" value="1"/>
</dbReference>
<dbReference type="InterPro" id="IPR000702">
    <property type="entry name" value="Ribosomal_uL6-like"/>
</dbReference>
<dbReference type="InterPro" id="IPR036789">
    <property type="entry name" value="Ribosomal_uL6-like_a/b-dom_sf"/>
</dbReference>
<dbReference type="InterPro" id="IPR020040">
    <property type="entry name" value="Ribosomal_uL6_a/b-dom"/>
</dbReference>
<dbReference type="InterPro" id="IPR019906">
    <property type="entry name" value="Ribosomal_uL6_bac-type"/>
</dbReference>
<dbReference type="InterPro" id="IPR002358">
    <property type="entry name" value="Ribosomal_uL6_CS"/>
</dbReference>
<dbReference type="NCBIfam" id="TIGR03654">
    <property type="entry name" value="L6_bact"/>
    <property type="match status" value="1"/>
</dbReference>
<dbReference type="PANTHER" id="PTHR11655">
    <property type="entry name" value="60S/50S RIBOSOMAL PROTEIN L6/L9"/>
    <property type="match status" value="1"/>
</dbReference>
<dbReference type="PANTHER" id="PTHR11655:SF14">
    <property type="entry name" value="LARGE RIBOSOMAL SUBUNIT PROTEIN UL6M"/>
    <property type="match status" value="1"/>
</dbReference>
<dbReference type="Pfam" id="PF00347">
    <property type="entry name" value="Ribosomal_L6"/>
    <property type="match status" value="2"/>
</dbReference>
<dbReference type="PIRSF" id="PIRSF002162">
    <property type="entry name" value="Ribosomal_L6"/>
    <property type="match status" value="1"/>
</dbReference>
<dbReference type="PRINTS" id="PR00059">
    <property type="entry name" value="RIBOSOMALL6"/>
</dbReference>
<dbReference type="SUPFAM" id="SSF56053">
    <property type="entry name" value="Ribosomal protein L6"/>
    <property type="match status" value="2"/>
</dbReference>
<dbReference type="PROSITE" id="PS00525">
    <property type="entry name" value="RIBOSOMAL_L6_1"/>
    <property type="match status" value="1"/>
</dbReference>
<reference key="1">
    <citation type="submission" date="2007-03" db="EMBL/GenBank/DDBJ databases">
        <title>Genome sequence of Rhodospirillum centenum.</title>
        <authorList>
            <person name="Touchman J.W."/>
            <person name="Bauer C."/>
            <person name="Blankenship R.E."/>
        </authorList>
    </citation>
    <scope>NUCLEOTIDE SEQUENCE [LARGE SCALE GENOMIC DNA]</scope>
    <source>
        <strain>ATCC 51521 / SW</strain>
    </source>
</reference>
<evidence type="ECO:0000255" key="1">
    <source>
        <dbReference type="HAMAP-Rule" id="MF_01365"/>
    </source>
</evidence>
<evidence type="ECO:0000305" key="2"/>
<feature type="chain" id="PRO_1000144037" description="Large ribosomal subunit protein uL6">
    <location>
        <begin position="1"/>
        <end position="177"/>
    </location>
</feature>
<comment type="function">
    <text evidence="1">This protein binds to the 23S rRNA, and is important in its secondary structure. It is located near the subunit interface in the base of the L7/L12 stalk, and near the tRNA binding site of the peptidyltransferase center.</text>
</comment>
<comment type="subunit">
    <text evidence="1">Part of the 50S ribosomal subunit.</text>
</comment>
<comment type="similarity">
    <text evidence="1">Belongs to the universal ribosomal protein uL6 family.</text>
</comment>
<accession>B6IRS1</accession>
<sequence>MSRIGKHPVPVPAGVTVTVAGQNLTAKGKLGQLSLSLIDDIAVSMEDGKVVVQPRTETKRARQNWATARTLVFNLVKGVNDGFTKNLEINGVGYKAAVQGKDLVLNLGYSHEIRYPIPEGITIKCDKPTSVSVSGTDKQQVGQVAAEIRAFRGPEPYKGKGVKYENEVIIRKEGKKK</sequence>
<gene>
    <name evidence="1" type="primary">rplF</name>
    <name type="ordered locus">RC1_0726</name>
</gene>
<name>RL6_RHOCS</name>